<comment type="function">
    <text evidence="4">Plays an essential role in the maturation of presomitic mesoderm cells by individual attenuation of both fgf and wnt signaling. Inhibits both wnt and fgf signaling through the regulation of protein maturation and cell surface transportation of their receptors within the endoplasmic reticulum.</text>
</comment>
<comment type="subunit">
    <text evidence="4">Interacts with fzd8 and fgfr1.</text>
</comment>
<comment type="subcellular location">
    <subcellularLocation>
        <location evidence="4">Endoplasmic reticulum membrane</location>
        <topology evidence="4">Single-pass type I membrane protein</topology>
    </subcellularLocation>
</comment>
<comment type="developmental stage">
    <text evidence="3 4">At late gastrula/early neurula stages expression is restricted to two stripes in the dorsal side but excluded from the dorsal midline. As somitogenesis commences, expression is localized to the paraxial region, lateral to the involuting neural tube. As development proceeds, expressied forming somites. Expression is stronger in the presomitic mesoderm and decreases as somites are formed.</text>
</comment>
<comment type="miscellaneous">
    <text>'Shisa' was named after a sculpture form, common to southern Japan, with a large head similar to the Egyptian sphinx.</text>
</comment>
<comment type="similarity">
    <text evidence="5">Belongs to the shisa family.</text>
</comment>
<comment type="sequence caution" evidence="5">
    <conflict type="miscellaneous discrepancy">
        <sequence resource="EMBL-CDS" id="AAH77953"/>
    </conflict>
    <text>Contaminating sequence. Potential poly-A sequence.</text>
</comment>
<keyword id="KW-0217">Developmental protein</keyword>
<keyword id="KW-0256">Endoplasmic reticulum</keyword>
<keyword id="KW-0472">Membrane</keyword>
<keyword id="KW-1185">Reference proteome</keyword>
<keyword id="KW-0732">Signal</keyword>
<keyword id="KW-0812">Transmembrane</keyword>
<keyword id="KW-1133">Transmembrane helix</keyword>
<reference key="1">
    <citation type="journal article" date="2006" name="Development">
        <title>Shisa2 promotes the maturation of somitic precursors and transition to the segmental fate in Xenopus embryos.</title>
        <authorList>
            <person name="Nagano T."/>
            <person name="Takehara S."/>
            <person name="Takahashi M."/>
            <person name="Aizawa S."/>
            <person name="Yamamoto A."/>
        </authorList>
    </citation>
    <scope>NUCLEOTIDE SEQUENCE [MRNA]</scope>
    <scope>FUNCTION</scope>
    <scope>SUBCELLULAR LOCATION</scope>
    <scope>INTERACTION WITH FZD8 AND FGFR1</scope>
    <scope>DEVELOPMENTAL STAGE</scope>
</reference>
<reference key="2">
    <citation type="journal article" date="2006" name="Int. J. Dev. Biol.">
        <title>Developmental expression of Shisa-2 in Xenopus laevis.</title>
        <authorList>
            <person name="Silva A.-C."/>
            <person name="Filipe M."/>
            <person name="Vitorino M."/>
            <person name="Steinbeisser H."/>
            <person name="Belo J.-A."/>
        </authorList>
    </citation>
    <scope>NUCLEOTIDE SEQUENCE [MRNA]</scope>
    <scope>DEVELOPMENTAL STAGE</scope>
</reference>
<reference key="3">
    <citation type="submission" date="2004-07" db="EMBL/GenBank/DDBJ databases">
        <authorList>
            <consortium name="NIH - Xenopus Gene Collection (XGC) project"/>
        </authorList>
    </citation>
    <scope>NUCLEOTIDE SEQUENCE [LARGE SCALE MRNA] OF 1-215</scope>
    <source>
        <tissue>Embryo</tissue>
    </source>
</reference>
<evidence type="ECO:0000255" key="1"/>
<evidence type="ECO:0000256" key="2">
    <source>
        <dbReference type="SAM" id="MobiDB-lite"/>
    </source>
</evidence>
<evidence type="ECO:0000269" key="3">
    <source>
    </source>
</evidence>
<evidence type="ECO:0000269" key="4">
    <source>
    </source>
</evidence>
<evidence type="ECO:0000305" key="5"/>
<protein>
    <recommendedName>
        <fullName>Protein shisa-2</fullName>
    </recommendedName>
    <alternativeName>
        <fullName>Transmembrane protein 46</fullName>
    </alternativeName>
</protein>
<dbReference type="EMBL" id="DQ342341">
    <property type="protein sequence ID" value="ABC69143.1"/>
    <property type="molecule type" value="mRNA"/>
</dbReference>
<dbReference type="EMBL" id="AB242597">
    <property type="protein sequence ID" value="BAE53531.1"/>
    <property type="molecule type" value="mRNA"/>
</dbReference>
<dbReference type="EMBL" id="BC077953">
    <property type="protein sequence ID" value="AAH77953.1"/>
    <property type="status" value="ALT_SEQ"/>
    <property type="molecule type" value="mRNA"/>
</dbReference>
<dbReference type="RefSeq" id="NP_001086445.1">
    <property type="nucleotide sequence ID" value="NM_001092976.1"/>
</dbReference>
<dbReference type="SMR" id="Q2WFL8"/>
<dbReference type="TCDB" id="8.A.83.1.6">
    <property type="family name" value="the shisa6 regulator of short-term neuronal synaptic plasticity (shisa) family"/>
</dbReference>
<dbReference type="GeneID" id="446232"/>
<dbReference type="KEGG" id="xla:446232"/>
<dbReference type="AGR" id="Xenbase:XB-GENE-939916"/>
<dbReference type="CTD" id="446232"/>
<dbReference type="Xenbase" id="XB-GENE-939916">
    <property type="gene designation" value="shisa2.L"/>
</dbReference>
<dbReference type="OMA" id="YCCSRNE"/>
<dbReference type="OrthoDB" id="10025410at2759"/>
<dbReference type="Proteomes" id="UP000186698">
    <property type="component" value="Chromosome 2L"/>
</dbReference>
<dbReference type="Bgee" id="446232">
    <property type="expression patterns" value="Expressed in muscle tissue and 15 other cell types or tissues"/>
</dbReference>
<dbReference type="GO" id="GO:0005783">
    <property type="term" value="C:endoplasmic reticulum"/>
    <property type="evidence" value="ECO:0000318"/>
    <property type="project" value="GO_Central"/>
</dbReference>
<dbReference type="GO" id="GO:0005789">
    <property type="term" value="C:endoplasmic reticulum membrane"/>
    <property type="evidence" value="ECO:0007669"/>
    <property type="project" value="UniProtKB-SubCell"/>
</dbReference>
<dbReference type="GO" id="GO:0040037">
    <property type="term" value="P:negative regulation of fibroblast growth factor receptor signaling pathway"/>
    <property type="evidence" value="ECO:0000318"/>
    <property type="project" value="GO_Central"/>
</dbReference>
<dbReference type="GO" id="GO:0030178">
    <property type="term" value="P:negative regulation of Wnt signaling pathway"/>
    <property type="evidence" value="ECO:0000318"/>
    <property type="project" value="GO_Central"/>
</dbReference>
<dbReference type="InterPro" id="IPR026910">
    <property type="entry name" value="Shisa"/>
</dbReference>
<dbReference type="InterPro" id="IPR053891">
    <property type="entry name" value="Shisa_N"/>
</dbReference>
<dbReference type="PANTHER" id="PTHR31395:SF0">
    <property type="entry name" value="PROTEIN SHISA-2 HOMOLOG"/>
    <property type="match status" value="1"/>
</dbReference>
<dbReference type="PANTHER" id="PTHR31395">
    <property type="entry name" value="SHISA"/>
    <property type="match status" value="1"/>
</dbReference>
<dbReference type="Pfam" id="PF13908">
    <property type="entry name" value="Shisa_N"/>
    <property type="match status" value="1"/>
</dbReference>
<sequence length="288" mass="31119">MWLEGSPLAVLAAVSFLLSVLAAAQGSGEYCHGWLDAQAVWRDGFQCPERFDGDDSTICCGKCELRYCCSSAEARLDQGVCNNDRQQGAPDHNRPDKDSPDSTAVPIYVPFLIVGSVFVAFIIVGSLVAICCCRCLRPKQEPQQSRAPGSNRLMETIPMISSASTSRGSSSRQSSTAASSSSSANSGARPPPTRSQTNCCLPEGAMNNVYVNMPTNFSVLNCQQATQLVQHQGQYLHPQFVGYAVPHDSVPMTPVPQFIDGLQGGYRQMQSPYPHSNPEQMMYPAVTV</sequence>
<organism>
    <name type="scientific">Xenopus laevis</name>
    <name type="common">African clawed frog</name>
    <dbReference type="NCBI Taxonomy" id="8355"/>
    <lineage>
        <taxon>Eukaryota</taxon>
        <taxon>Metazoa</taxon>
        <taxon>Chordata</taxon>
        <taxon>Craniata</taxon>
        <taxon>Vertebrata</taxon>
        <taxon>Euteleostomi</taxon>
        <taxon>Amphibia</taxon>
        <taxon>Batrachia</taxon>
        <taxon>Anura</taxon>
        <taxon>Pipoidea</taxon>
        <taxon>Pipidae</taxon>
        <taxon>Xenopodinae</taxon>
        <taxon>Xenopus</taxon>
        <taxon>Xenopus</taxon>
    </lineage>
</organism>
<gene>
    <name type="primary">shisa2</name>
    <name type="synonym">tmem46</name>
</gene>
<accession>Q2WFL8</accession>
<accession>Q6DCP9</accession>
<proteinExistence type="evidence at protein level"/>
<feature type="signal peptide" evidence="1">
    <location>
        <begin position="1"/>
        <end position="23"/>
    </location>
</feature>
<feature type="chain" id="PRO_0000330024" description="Protein shisa-2">
    <location>
        <begin position="24"/>
        <end position="288"/>
    </location>
</feature>
<feature type="topological domain" description="Extracellular" evidence="1">
    <location>
        <begin position="24"/>
        <end position="110"/>
    </location>
</feature>
<feature type="transmembrane region" description="Helical" evidence="1">
    <location>
        <begin position="111"/>
        <end position="131"/>
    </location>
</feature>
<feature type="topological domain" description="Cytoplasmic" evidence="1">
    <location>
        <begin position="132"/>
        <end position="288"/>
    </location>
</feature>
<feature type="region of interest" description="Disordered" evidence="2">
    <location>
        <begin position="161"/>
        <end position="198"/>
    </location>
</feature>
<feature type="compositionally biased region" description="Low complexity" evidence="2">
    <location>
        <begin position="161"/>
        <end position="188"/>
    </location>
</feature>
<name>SHSA2_XENLA</name>